<reference key="1">
    <citation type="journal article" date="2011" name="Biosci. Biotechnol. Biochem.">
        <title>Biochemical characterization of a thermophilic cellobiose 2-epimerase from a thermohalophilic bacterium, Rhodothermus marinus JCM9785.</title>
        <authorList>
            <person name="Ojima T."/>
            <person name="Saburi W."/>
            <person name="Sato H."/>
            <person name="Yamamoto T."/>
            <person name="Mori H."/>
            <person name="Matsui H."/>
        </authorList>
    </citation>
    <scope>NUCLEOTIDE SEQUENCE [GENOMIC DNA]</scope>
    <scope>PROTEIN SEQUENCE OF 4-12</scope>
    <scope>FUNCTION</scope>
    <scope>CATALYTIC ACTIVITY</scope>
    <scope>BIOPHYSICOCHEMICAL PROPERTIES</scope>
    <source>
        <strain>OKD7 / DSM 12399 / JCM 9785</strain>
    </source>
</reference>
<proteinExistence type="evidence at protein level"/>
<gene>
    <name type="primary">ce</name>
</gene>
<organism>
    <name type="scientific">Rhodothermus marinus</name>
    <name type="common">Rhodothermus obamensis</name>
    <dbReference type="NCBI Taxonomy" id="29549"/>
    <lineage>
        <taxon>Bacteria</taxon>
        <taxon>Pseudomonadati</taxon>
        <taxon>Rhodothermota</taxon>
        <taxon>Rhodothermia</taxon>
        <taxon>Rhodothermales</taxon>
        <taxon>Rhodothermaceae</taxon>
        <taxon>Rhodothermus</taxon>
    </lineage>
</organism>
<evidence type="ECO:0000255" key="1">
    <source>
        <dbReference type="HAMAP-Rule" id="MF_00929"/>
    </source>
</evidence>
<evidence type="ECO:0000269" key="2">
    <source>
    </source>
</evidence>
<evidence type="ECO:0007829" key="3">
    <source>
        <dbReference type="PDB" id="3WKG"/>
    </source>
</evidence>
<keyword id="KW-0002">3D-structure</keyword>
<keyword id="KW-0903">Direct protein sequencing</keyword>
<keyword id="KW-0413">Isomerase</keyword>
<sequence length="412" mass="47387">MSTETIPDVRRLRALQAEVHEELTENILKFWATRTHDPVHGGFVGRVGPDGRPHPEAPRGAILNARILWTFAAAYRQLGTPLYREMAERAYRYFVRHFVDAEHGGVYWMVAADGRPLDTRKHVYAQSFAIYALSEWHRATGGEAALALARSIYDLIETHCADRVHGGYVEACDRAWRPLEDARLSAKDAPEPRSMNTHLHVLEAYANLYRVWPETELAARLQALIELFLRAIYHPATGHLILFFDERWRPRSRAVSFGHDIEASWLLLEAVDVLGQATLRPRVQQASLHLARATLAEGRAPDGSLYYEIGEQGHLDTDRHWWPQAEALVGFLNAYQESGEVLFYEAAEDVWRYIRERQRDTRGGEWFARVRDDGAPYPDDKVDFWKGPYHNGRACLEAIQRLRHLLEHVRSR</sequence>
<protein>
    <recommendedName>
        <fullName evidence="1">Cellobiose 2-epimerase</fullName>
        <shortName evidence="1">CE</shortName>
        <ecNumber evidence="1">5.1.3.11</ecNumber>
    </recommendedName>
</protein>
<dbReference type="EC" id="5.1.3.11" evidence="1"/>
<dbReference type="EMBL" id="AB638764">
    <property type="protein sequence ID" value="BAK61777.1"/>
    <property type="molecule type" value="Genomic_DNA"/>
</dbReference>
<dbReference type="PDB" id="3WKF">
    <property type="method" value="X-ray"/>
    <property type="resolution" value="1.74 A"/>
    <property type="chains" value="A=1-412"/>
</dbReference>
<dbReference type="PDB" id="3WKG">
    <property type="method" value="X-ray"/>
    <property type="resolution" value="1.47 A"/>
    <property type="chains" value="A=1-412"/>
</dbReference>
<dbReference type="PDB" id="3WKH">
    <property type="method" value="X-ray"/>
    <property type="resolution" value="1.64 A"/>
    <property type="chains" value="A=1-412"/>
</dbReference>
<dbReference type="PDB" id="3WKI">
    <property type="method" value="X-ray"/>
    <property type="resolution" value="2.19 A"/>
    <property type="chains" value="A=1-412"/>
</dbReference>
<dbReference type="PDBsum" id="3WKF"/>
<dbReference type="PDBsum" id="3WKG"/>
<dbReference type="PDBsum" id="3WKH"/>
<dbReference type="PDBsum" id="3WKI"/>
<dbReference type="SMR" id="F8WRK9"/>
<dbReference type="BRENDA" id="5.1.3.11">
    <property type="organism ID" value="5425"/>
</dbReference>
<dbReference type="EvolutionaryTrace" id="F8WRK9"/>
<dbReference type="GO" id="GO:0047736">
    <property type="term" value="F:cellobiose epimerase activity"/>
    <property type="evidence" value="ECO:0007669"/>
    <property type="project" value="UniProtKB-UniRule"/>
</dbReference>
<dbReference type="GO" id="GO:0005975">
    <property type="term" value="P:carbohydrate metabolic process"/>
    <property type="evidence" value="ECO:0007669"/>
    <property type="project" value="InterPro"/>
</dbReference>
<dbReference type="Gene3D" id="1.50.10.10">
    <property type="match status" value="1"/>
</dbReference>
<dbReference type="HAMAP" id="MF_00929">
    <property type="entry name" value="Cellobiose_2_epim"/>
    <property type="match status" value="1"/>
</dbReference>
<dbReference type="InterPro" id="IPR008928">
    <property type="entry name" value="6-hairpin_glycosidase_sf"/>
</dbReference>
<dbReference type="InterPro" id="IPR012341">
    <property type="entry name" value="6hp_glycosidase-like_sf"/>
</dbReference>
<dbReference type="InterPro" id="IPR010819">
    <property type="entry name" value="AGE/CE"/>
</dbReference>
<dbReference type="InterPro" id="IPR028584">
    <property type="entry name" value="Cellobiose_2_epim"/>
</dbReference>
<dbReference type="PANTHER" id="PTHR15108">
    <property type="entry name" value="N-ACYLGLUCOSAMINE-2-EPIMERASE"/>
    <property type="match status" value="1"/>
</dbReference>
<dbReference type="Pfam" id="PF07221">
    <property type="entry name" value="GlcNAc_2-epim"/>
    <property type="match status" value="1"/>
</dbReference>
<dbReference type="SUPFAM" id="SSF48208">
    <property type="entry name" value="Six-hairpin glycosidases"/>
    <property type="match status" value="1"/>
</dbReference>
<comment type="function">
    <text evidence="1 2">Catalyzes the reversible epimerization of cellobiose to 4-O-beta-D-glucopyranosyl-D-mannose (Glc-Man). Can also use lactose, epilactose, mannobiose and cellotriose. Highly specific for oligosaccharides linked by the beta-1,4-glycosidic linkage. Shows preference for lactose.</text>
</comment>
<comment type="catalytic activity">
    <reaction evidence="1 2">
        <text>D-cellobiose = beta-D-glucosyl-(1-&gt;4)-D-mannopyranose</text>
        <dbReference type="Rhea" id="RHEA:23384"/>
        <dbReference type="ChEBI" id="CHEBI:17057"/>
        <dbReference type="ChEBI" id="CHEBI:47931"/>
        <dbReference type="EC" id="5.1.3.11"/>
    </reaction>
</comment>
<comment type="biophysicochemical properties">
    <kinetics>
        <KM evidence="2">27.2 mM for cellobiose</KM>
        <KM evidence="2">28.8 mM for lactose</KM>
        <text>kcat is 80.8 sec(-1) for cellobiose. kcat is 111 sec(-1) for lactose.</text>
    </kinetics>
    <phDependence>
        <text evidence="2">Optimum pH is 6.3.</text>
    </phDependence>
    <temperatureDependence>
        <text evidence="2">Optimum temperature is 80 degrees Celsius.</text>
    </temperatureDependence>
</comment>
<comment type="similarity">
    <text evidence="1">Belongs to the cellobiose 2-epimerase family.</text>
</comment>
<accession>F8WRK9</accession>
<name>CEEP_RHOMR</name>
<feature type="chain" id="PRO_0000421447" description="Cellobiose 2-epimerase">
    <location>
        <begin position="1"/>
        <end position="412"/>
    </location>
</feature>
<feature type="helix" evidence="3">
    <location>
        <begin position="9"/>
        <end position="25"/>
    </location>
</feature>
<feature type="helix" evidence="3">
    <location>
        <begin position="27"/>
        <end position="34"/>
    </location>
</feature>
<feature type="turn" evidence="3">
    <location>
        <begin position="38"/>
        <end position="40"/>
    </location>
</feature>
<feature type="strand" evidence="3">
    <location>
        <begin position="41"/>
        <end position="43"/>
    </location>
</feature>
<feature type="helix" evidence="3">
    <location>
        <begin position="61"/>
        <end position="78"/>
    </location>
</feature>
<feature type="helix" evidence="3">
    <location>
        <begin position="81"/>
        <end position="97"/>
    </location>
</feature>
<feature type="turn" evidence="3">
    <location>
        <begin position="101"/>
        <end position="103"/>
    </location>
</feature>
<feature type="strand" evidence="3">
    <location>
        <begin position="108"/>
        <end position="110"/>
    </location>
</feature>
<feature type="strand" evidence="3">
    <location>
        <begin position="116"/>
        <end position="118"/>
    </location>
</feature>
<feature type="helix" evidence="3">
    <location>
        <begin position="123"/>
        <end position="140"/>
    </location>
</feature>
<feature type="helix" evidence="3">
    <location>
        <begin position="143"/>
        <end position="159"/>
    </location>
</feature>
<feature type="turn" evidence="3">
    <location>
        <begin position="163"/>
        <end position="165"/>
    </location>
</feature>
<feature type="strand" evidence="3">
    <location>
        <begin position="166"/>
        <end position="168"/>
    </location>
</feature>
<feature type="strand" evidence="3">
    <location>
        <begin position="192"/>
        <end position="194"/>
    </location>
</feature>
<feature type="helix" evidence="3">
    <location>
        <begin position="195"/>
        <end position="211"/>
    </location>
</feature>
<feature type="helix" evidence="3">
    <location>
        <begin position="215"/>
        <end position="231"/>
    </location>
</feature>
<feature type="turn" evidence="3">
    <location>
        <begin position="235"/>
        <end position="237"/>
    </location>
</feature>
<feature type="strand" evidence="3">
    <location>
        <begin position="238"/>
        <end position="240"/>
    </location>
</feature>
<feature type="helix" evidence="3">
    <location>
        <begin position="257"/>
        <end position="274"/>
    </location>
</feature>
<feature type="turn" evidence="3">
    <location>
        <begin position="277"/>
        <end position="279"/>
    </location>
</feature>
<feature type="helix" evidence="3">
    <location>
        <begin position="280"/>
        <end position="297"/>
    </location>
</feature>
<feature type="helix" evidence="3">
    <location>
        <begin position="321"/>
        <end position="338"/>
    </location>
</feature>
<feature type="helix" evidence="3">
    <location>
        <begin position="342"/>
        <end position="356"/>
    </location>
</feature>
<feature type="turn" evidence="3">
    <location>
        <begin position="361"/>
        <end position="363"/>
    </location>
</feature>
<feature type="strand" evidence="3">
    <location>
        <begin position="364"/>
        <end position="366"/>
    </location>
</feature>
<feature type="strand" evidence="3">
    <location>
        <begin position="368"/>
        <end position="370"/>
    </location>
</feature>
<feature type="strand" evidence="3">
    <location>
        <begin position="381"/>
        <end position="383"/>
    </location>
</feature>
<feature type="helix" evidence="3">
    <location>
        <begin position="389"/>
        <end position="406"/>
    </location>
</feature>